<feature type="chain" id="PRO_0000054031" description="Potassium voltage-gated channel subfamily KQT member 2">
    <location>
        <begin position="1"/>
        <end position="759"/>
    </location>
</feature>
<feature type="topological domain" description="Cytoplasmic" evidence="13">
    <location>
        <begin position="1"/>
        <end position="90"/>
    </location>
</feature>
<feature type="transmembrane region" description="Helical; Name=Segment S1" evidence="2">
    <location>
        <begin position="91"/>
        <end position="113"/>
    </location>
</feature>
<feature type="topological domain" description="Extracellular" evidence="13">
    <location>
        <begin position="114"/>
        <end position="123"/>
    </location>
</feature>
<feature type="transmembrane region" description="Helical; Name=Segment S2" evidence="2">
    <location>
        <begin position="124"/>
        <end position="145"/>
    </location>
</feature>
<feature type="topological domain" description="Cytoplasmic" evidence="13">
    <location>
        <begin position="146"/>
        <end position="163"/>
    </location>
</feature>
<feature type="transmembrane region" description="Helical; Name=Segment S3" evidence="2">
    <location>
        <begin position="164"/>
        <end position="183"/>
    </location>
</feature>
<feature type="topological domain" description="Extracellular" evidence="13">
    <location>
        <begin position="184"/>
        <end position="196"/>
    </location>
</feature>
<feature type="transmembrane region" description="Helical; Voltage-sensor; Name=Segment S4" evidence="2">
    <location>
        <begin position="197"/>
        <end position="215"/>
    </location>
</feature>
<feature type="topological domain" description="Cytoplasmic" evidence="13">
    <location>
        <begin position="216"/>
        <end position="227"/>
    </location>
</feature>
<feature type="transmembrane region" description="Helical; Name=Segment S5" evidence="2">
    <location>
        <begin position="228"/>
        <end position="253"/>
    </location>
</feature>
<feature type="topological domain" description="Extracellular" evidence="13">
    <location>
        <begin position="254"/>
        <end position="263"/>
    </location>
</feature>
<feature type="intramembrane region" description="Pore-forming; Name=Segment H5" evidence="2">
    <location>
        <begin position="264"/>
        <end position="276"/>
    </location>
</feature>
<feature type="topological domain" description="Extracellular" evidence="13">
    <location>
        <begin position="277"/>
        <end position="287"/>
    </location>
</feature>
<feature type="transmembrane region" description="Helical; Name=Segment S6" evidence="2">
    <location>
        <begin position="288"/>
        <end position="314"/>
    </location>
</feature>
<feature type="topological domain" description="Cytoplasmic" evidence="13">
    <location>
        <begin position="315"/>
        <end position="759"/>
    </location>
</feature>
<feature type="region of interest" description="Mediates interaction with SLC5A3" evidence="3">
    <location>
        <begin position="222"/>
        <end position="323"/>
    </location>
</feature>
<feature type="region of interest" description="Mediates interaction with calmodulin" evidence="2">
    <location>
        <begin position="317"/>
        <end position="512"/>
    </location>
</feature>
<feature type="region of interest" description="Disordered" evidence="5">
    <location>
        <begin position="393"/>
        <end position="412"/>
    </location>
</feature>
<feature type="region of interest" description="Disordered" evidence="5">
    <location>
        <begin position="419"/>
        <end position="459"/>
    </location>
</feature>
<feature type="region of interest" description="Disordered" evidence="5">
    <location>
        <begin position="565"/>
        <end position="628"/>
    </location>
</feature>
<feature type="region of interest" description="Disordered" evidence="5">
    <location>
        <begin position="705"/>
        <end position="742"/>
    </location>
</feature>
<feature type="short sequence motif" description="Selectivity filter" evidence="1">
    <location>
        <begin position="277"/>
        <end position="282"/>
    </location>
</feature>
<feature type="compositionally biased region" description="Polar residues" evidence="5">
    <location>
        <begin position="430"/>
        <end position="447"/>
    </location>
</feature>
<feature type="compositionally biased region" description="Basic and acidic residues" evidence="5">
    <location>
        <begin position="609"/>
        <end position="618"/>
    </location>
</feature>
<feature type="binding site" evidence="2">
    <location>
        <position position="214"/>
    </location>
    <ligand>
        <name>a 1,2-diacyl-sn-glycero-3-phospho-(1D-myo-inositol-4,5-bisphosphate)</name>
        <dbReference type="ChEBI" id="CHEBI:58456"/>
    </ligand>
</feature>
<feature type="binding site" evidence="2">
    <location>
        <position position="230"/>
    </location>
    <ligand>
        <name>a 1,2-diacyl-sn-glycero-3-phospho-(1D-myo-inositol-4,5-bisphosphate)</name>
        <dbReference type="ChEBI" id="CHEBI:58456"/>
    </ligand>
</feature>
<feature type="binding site" evidence="2">
    <location>
        <position position="327"/>
    </location>
    <ligand>
        <name>a 1,2-diacyl-sn-glycero-3-phospho-(1D-myo-inositol-4,5-bisphosphate)</name>
        <dbReference type="ChEBI" id="CHEBI:58456"/>
    </ligand>
</feature>
<feature type="modified residue" description="Phosphoserine; by PKA" evidence="2">
    <location>
        <position position="52"/>
    </location>
</feature>
<feature type="modified residue" description="Phosphoserine" evidence="15">
    <location>
        <position position="438"/>
    </location>
</feature>
<feature type="modified residue" description="Phosphoserine" evidence="15">
    <location>
        <position position="440"/>
    </location>
</feature>
<feature type="modified residue" description="Phosphoserine" evidence="15">
    <location>
        <position position="444"/>
    </location>
</feature>
<feature type="modified residue" description="Phosphoserine" evidence="15">
    <location>
        <position position="448"/>
    </location>
</feature>
<feature type="modified residue" description="Phosphoserine" evidence="15">
    <location>
        <position position="450"/>
    </location>
</feature>
<feature type="modified residue" description="Phosphoserine" evidence="3">
    <location>
        <position position="479"/>
    </location>
</feature>
<feature type="modified residue" description="Phosphoserine" evidence="3">
    <location>
        <position position="681"/>
    </location>
</feature>
<feature type="splice variant" id="VSP_000991" description="In isoform 11." evidence="12">
    <original>GILGSGFALKVQEQHRPKHFEKRRNPAAG</original>
    <variation>VSPAHLPTLEMLGVLEAPHKAWPWPTCEL</variation>
    <location>
        <begin position="310"/>
        <end position="338"/>
    </location>
</feature>
<feature type="splice variant" id="VSP_000992" description="In isoform 11." evidence="12">
    <location>
        <begin position="339"/>
        <end position="759"/>
    </location>
</feature>
<feature type="splice variant" id="VSP_000993" description="In isoform 9." evidence="12">
    <original>SAWRFYAT</original>
    <variation>GQVRCAGH</variation>
    <location>
        <begin position="342"/>
        <end position="349"/>
    </location>
</feature>
<feature type="splice variant" id="VSP_000995" description="In isoform 10." evidence="12">
    <original>SAWRFY</original>
    <variation>VSLSPC</variation>
    <location>
        <begin position="342"/>
        <end position="347"/>
    </location>
</feature>
<feature type="splice variant" id="VSP_000996" description="In isoform 10." evidence="12">
    <location>
        <begin position="348"/>
        <end position="759"/>
    </location>
</feature>
<feature type="splice variant" id="VSP_000994" description="In isoform 9." evidence="12">
    <location>
        <begin position="350"/>
        <end position="759"/>
    </location>
</feature>
<feature type="splice variant" id="VSP_000997" description="In isoform 7, isoform 12 and isoform 13." evidence="10 11 12">
    <original>Y</original>
    <variation>YSSQTQTYGAS</variation>
    <location>
        <position position="372"/>
    </location>
</feature>
<feature type="splice variant" id="VSP_000998" description="In isoform 7 and isoform 8." evidence="12">
    <original>SQKVSLKDRVFSSPRGMAAKGKGSPQAQTVRRSPSADQSLDDSPSKVPKSWSFGDRSR</original>
    <variation>RSVPPASSRPGVCCTHLALLSLCIHHVSWGRATMGPCVCFYVQQVTVCPGTPRVTSQL</variation>
    <location>
        <begin position="406"/>
        <end position="463"/>
    </location>
</feature>
<feature type="splice variant" id="VSP_012365" description="In isoform 12." evidence="10">
    <original>S</original>
    <variation>SKGRPCRGCLCGCCPGHSS</variation>
    <location>
        <position position="406"/>
    </location>
</feature>
<feature type="splice variant" id="VSP_001000" description="In isoform 3." evidence="12">
    <location>
        <begin position="407"/>
        <end position="418"/>
    </location>
</feature>
<feature type="splice variant" id="VSP_000999" description="In isoform 7 and isoform 8." evidence="12">
    <location>
        <begin position="464"/>
        <end position="759"/>
    </location>
</feature>
<feature type="splice variant" id="VSP_001005" description="In isoform 6." evidence="12">
    <original>IDMIVGPPPPSTPRDKKYPTKGPTAPSRESPQYSPRVDHIVGRGPTITDKDRTKGPAETELP</original>
    <variation>QEPLPVQSGHEQGPPGQNQAWHKGHQGLGDRCAEQGQYQLWRSLPTLLASCCFLLCFHTVCF</variation>
    <location>
        <begin position="562"/>
        <end position="623"/>
    </location>
</feature>
<feature type="splice variant" id="VSP_001002" description="In isoform 4 and isoform 12." evidence="10 12">
    <location>
        <begin position="562"/>
        <end position="597"/>
    </location>
</feature>
<feature type="splice variant" id="VSP_001001" description="In isoform 2." evidence="12">
    <original>IDMIVGPPPPSTPRDKKYPTKGPTAPSRESPQYSP</original>
    <variation>QEPLPVQSGHEQGPPGQNQAWHKGHQGLGD</variation>
    <location>
        <begin position="562"/>
        <end position="596"/>
    </location>
</feature>
<feature type="splice variant" id="VSP_001003" description="In isoform 5." evidence="12">
    <original>IDMIVGPPP</original>
    <variation>SCDWRGVLA</variation>
    <location>
        <begin position="562"/>
        <end position="570"/>
    </location>
</feature>
<feature type="splice variant" id="VSP_001004" description="In isoform 5." evidence="12">
    <location>
        <begin position="571"/>
        <end position="759"/>
    </location>
</feature>
<feature type="splice variant" id="VSP_022637" description="In isoform 13." evidence="11">
    <location>
        <begin position="571"/>
        <end position="606"/>
    </location>
</feature>
<feature type="splice variant" id="VSP_001006" description="In isoform 6." evidence="12">
    <location>
        <begin position="624"/>
        <end position="759"/>
    </location>
</feature>
<feature type="splice variant" id="VSP_012366" description="In isoform 12 and isoform 13." evidence="10 11">
    <original>LRLERSAGMMSCH</original>
    <variation>RIPPPPAHERSLSAYGGGNRASTEFLRLEGTPACRPSEAALRDSDTSISIPSVDHEELERSFSGFSISQSKENLDALGSCYAAVAPCAKVRPYIAEGESDTDSDLCTPCGPPPRSATGEGPFGDVAWAGPRK</variation>
    <location>
        <begin position="747"/>
        <end position="759"/>
    </location>
</feature>
<feature type="mutagenesis site" description="Loss of interaction with calmodulin." evidence="7">
    <original>R</original>
    <variation>E</variation>
    <location>
        <position position="345"/>
    </location>
</feature>
<feature type="mutagenesis site" description="Loss of interaction with calmodulin; when associated with E-526." evidence="7">
    <original>K</original>
    <variation>E</variation>
    <location>
        <position position="525"/>
    </location>
</feature>
<feature type="mutagenesis site" description="Loss of interaction with calmodulin; when associated with E-525." evidence="7">
    <original>R</original>
    <variation>E</variation>
    <location>
        <position position="526"/>
    </location>
</feature>
<feature type="sequence conflict" description="In Ref. 1; BAA37161." evidence="13" ref="1">
    <original>A</original>
    <variation>P</variation>
    <location>
        <position position="125"/>
    </location>
</feature>
<feature type="sequence conflict" description="In Ref. 1; BAA37160/BAA37165 and 2; AAM09696." evidence="13" ref="1 2">
    <original>P</original>
    <variation>Q</variation>
    <location>
        <position position="326"/>
    </location>
</feature>
<feature type="sequence conflict" description="In Ref. 2; AAM09696." evidence="13" ref="2">
    <original>H</original>
    <variation>Q</variation>
    <location>
        <position position="600"/>
    </location>
</feature>
<feature type="modified residue" description="Phosphotyrosine" evidence="15">
    <location sequence="Q9Z351-12">
        <position position="831"/>
    </location>
</feature>
<feature type="modified residue" description="Phosphotyrosine" evidence="15">
    <location sequence="Q9Z351-13">
        <position position="813"/>
    </location>
</feature>
<reference key="1">
    <citation type="journal article" date="1998" name="Recept. Channels">
        <title>KQT2, a new putative potassium channel family produced by alternative splicing. Isolation, genomic structure, and alternative splicing of the putative potassium channels.</title>
        <authorList>
            <person name="Nakamura M."/>
            <person name="Watanabe H."/>
            <person name="Kubo Y."/>
            <person name="Yokoyama M."/>
            <person name="Matsumoto T."/>
            <person name="Sasai H."/>
            <person name="Nishi Y."/>
        </authorList>
    </citation>
    <scope>NUCLEOTIDE SEQUENCE [MRNA] (ISOFORMS 1; 2; 3; 4; 5; 6; 7; 8; 9; 10 AND 11)</scope>
    <source>
        <tissue>Brain</tissue>
    </source>
</reference>
<reference key="2">
    <citation type="journal article" date="2002" name="J. Neurosci.">
        <title>Calmodulin is an auxiliary subunit of KCNQ2/3 potassium channels.</title>
        <authorList>
            <person name="Wen H."/>
            <person name="Levitan I.B."/>
        </authorList>
    </citation>
    <scope>NUCLEOTIDE SEQUENCE [MRNA] (ISOFORM 12)</scope>
    <scope>FUNCTION</scope>
    <scope>INTERACTION WITH CALMODULIN</scope>
    <scope>SUBCELLULAR LOCATION</scope>
    <scope>MUTAGENESIS OF ARG-345; LYS-525 AND ARG-526</scope>
    <source>
        <strain>BALB/cJ</strain>
    </source>
</reference>
<reference key="3">
    <citation type="journal article" date="2005" name="Science">
        <title>The transcriptional landscape of the mammalian genome.</title>
        <authorList>
            <person name="Carninci P."/>
            <person name="Kasukawa T."/>
            <person name="Katayama S."/>
            <person name="Gough J."/>
            <person name="Frith M.C."/>
            <person name="Maeda N."/>
            <person name="Oyama R."/>
            <person name="Ravasi T."/>
            <person name="Lenhard B."/>
            <person name="Wells C."/>
            <person name="Kodzius R."/>
            <person name="Shimokawa K."/>
            <person name="Bajic V.B."/>
            <person name="Brenner S.E."/>
            <person name="Batalov S."/>
            <person name="Forrest A.R."/>
            <person name="Zavolan M."/>
            <person name="Davis M.J."/>
            <person name="Wilming L.G."/>
            <person name="Aidinis V."/>
            <person name="Allen J.E."/>
            <person name="Ambesi-Impiombato A."/>
            <person name="Apweiler R."/>
            <person name="Aturaliya R.N."/>
            <person name="Bailey T.L."/>
            <person name="Bansal M."/>
            <person name="Baxter L."/>
            <person name="Beisel K.W."/>
            <person name="Bersano T."/>
            <person name="Bono H."/>
            <person name="Chalk A.M."/>
            <person name="Chiu K.P."/>
            <person name="Choudhary V."/>
            <person name="Christoffels A."/>
            <person name="Clutterbuck D.R."/>
            <person name="Crowe M.L."/>
            <person name="Dalla E."/>
            <person name="Dalrymple B.P."/>
            <person name="de Bono B."/>
            <person name="Della Gatta G."/>
            <person name="di Bernardo D."/>
            <person name="Down T."/>
            <person name="Engstrom P."/>
            <person name="Fagiolini M."/>
            <person name="Faulkner G."/>
            <person name="Fletcher C.F."/>
            <person name="Fukushima T."/>
            <person name="Furuno M."/>
            <person name="Futaki S."/>
            <person name="Gariboldi M."/>
            <person name="Georgii-Hemming P."/>
            <person name="Gingeras T.R."/>
            <person name="Gojobori T."/>
            <person name="Green R.E."/>
            <person name="Gustincich S."/>
            <person name="Harbers M."/>
            <person name="Hayashi Y."/>
            <person name="Hensch T.K."/>
            <person name="Hirokawa N."/>
            <person name="Hill D."/>
            <person name="Huminiecki L."/>
            <person name="Iacono M."/>
            <person name="Ikeo K."/>
            <person name="Iwama A."/>
            <person name="Ishikawa T."/>
            <person name="Jakt M."/>
            <person name="Kanapin A."/>
            <person name="Katoh M."/>
            <person name="Kawasawa Y."/>
            <person name="Kelso J."/>
            <person name="Kitamura H."/>
            <person name="Kitano H."/>
            <person name="Kollias G."/>
            <person name="Krishnan S.P."/>
            <person name="Kruger A."/>
            <person name="Kummerfeld S.K."/>
            <person name="Kurochkin I.V."/>
            <person name="Lareau L.F."/>
            <person name="Lazarevic D."/>
            <person name="Lipovich L."/>
            <person name="Liu J."/>
            <person name="Liuni S."/>
            <person name="McWilliam S."/>
            <person name="Madan Babu M."/>
            <person name="Madera M."/>
            <person name="Marchionni L."/>
            <person name="Matsuda H."/>
            <person name="Matsuzawa S."/>
            <person name="Miki H."/>
            <person name="Mignone F."/>
            <person name="Miyake S."/>
            <person name="Morris K."/>
            <person name="Mottagui-Tabar S."/>
            <person name="Mulder N."/>
            <person name="Nakano N."/>
            <person name="Nakauchi H."/>
            <person name="Ng P."/>
            <person name="Nilsson R."/>
            <person name="Nishiguchi S."/>
            <person name="Nishikawa S."/>
            <person name="Nori F."/>
            <person name="Ohara O."/>
            <person name="Okazaki Y."/>
            <person name="Orlando V."/>
            <person name="Pang K.C."/>
            <person name="Pavan W.J."/>
            <person name="Pavesi G."/>
            <person name="Pesole G."/>
            <person name="Petrovsky N."/>
            <person name="Piazza S."/>
            <person name="Reed J."/>
            <person name="Reid J.F."/>
            <person name="Ring B.Z."/>
            <person name="Ringwald M."/>
            <person name="Rost B."/>
            <person name="Ruan Y."/>
            <person name="Salzberg S.L."/>
            <person name="Sandelin A."/>
            <person name="Schneider C."/>
            <person name="Schoenbach C."/>
            <person name="Sekiguchi K."/>
            <person name="Semple C.A."/>
            <person name="Seno S."/>
            <person name="Sessa L."/>
            <person name="Sheng Y."/>
            <person name="Shibata Y."/>
            <person name="Shimada H."/>
            <person name="Shimada K."/>
            <person name="Silva D."/>
            <person name="Sinclair B."/>
            <person name="Sperling S."/>
            <person name="Stupka E."/>
            <person name="Sugiura K."/>
            <person name="Sultana R."/>
            <person name="Takenaka Y."/>
            <person name="Taki K."/>
            <person name="Tammoja K."/>
            <person name="Tan S.L."/>
            <person name="Tang S."/>
            <person name="Taylor M.S."/>
            <person name="Tegner J."/>
            <person name="Teichmann S.A."/>
            <person name="Ueda H.R."/>
            <person name="van Nimwegen E."/>
            <person name="Verardo R."/>
            <person name="Wei C.L."/>
            <person name="Yagi K."/>
            <person name="Yamanishi H."/>
            <person name="Zabarovsky E."/>
            <person name="Zhu S."/>
            <person name="Zimmer A."/>
            <person name="Hide W."/>
            <person name="Bult C."/>
            <person name="Grimmond S.M."/>
            <person name="Teasdale R.D."/>
            <person name="Liu E.T."/>
            <person name="Brusic V."/>
            <person name="Quackenbush J."/>
            <person name="Wahlestedt C."/>
            <person name="Mattick J.S."/>
            <person name="Hume D.A."/>
            <person name="Kai C."/>
            <person name="Sasaki D."/>
            <person name="Tomaru Y."/>
            <person name="Fukuda S."/>
            <person name="Kanamori-Katayama M."/>
            <person name="Suzuki M."/>
            <person name="Aoki J."/>
            <person name="Arakawa T."/>
            <person name="Iida J."/>
            <person name="Imamura K."/>
            <person name="Itoh M."/>
            <person name="Kato T."/>
            <person name="Kawaji H."/>
            <person name="Kawagashira N."/>
            <person name="Kawashima T."/>
            <person name="Kojima M."/>
            <person name="Kondo S."/>
            <person name="Konno H."/>
            <person name="Nakano K."/>
            <person name="Ninomiya N."/>
            <person name="Nishio T."/>
            <person name="Okada M."/>
            <person name="Plessy C."/>
            <person name="Shibata K."/>
            <person name="Shiraki T."/>
            <person name="Suzuki S."/>
            <person name="Tagami M."/>
            <person name="Waki K."/>
            <person name="Watahiki A."/>
            <person name="Okamura-Oho Y."/>
            <person name="Suzuki H."/>
            <person name="Kawai J."/>
            <person name="Hayashizaki Y."/>
        </authorList>
    </citation>
    <scope>NUCLEOTIDE SEQUENCE [LARGE SCALE MRNA] OF 58-759 (ISOFORM 13)</scope>
    <source>
        <strain>C57BL/6J</strain>
        <tissue>Brain cortex</tissue>
    </source>
</reference>
<reference key="4">
    <citation type="journal article" date="2000" name="J. Neurochem.">
        <title>Disruption of the epilepsy KCNQ2 gene results in neural hyperexcitability.</title>
        <authorList>
            <person name="Watanabe H."/>
            <person name="Nagata E."/>
            <person name="Kosakai A."/>
            <person name="Nakamura M."/>
            <person name="Yokoyama M."/>
            <person name="Tanaka K."/>
            <person name="Sasai H."/>
        </authorList>
    </citation>
    <scope>DISRUPTION PHENOTYPE</scope>
</reference>
<reference key="5">
    <citation type="journal article" date="2006" name="Mol. Cell. Proteomics">
        <title>Comprehensive identification of phosphorylation sites in postsynaptic density preparations.</title>
        <authorList>
            <person name="Trinidad J.C."/>
            <person name="Specht C.G."/>
            <person name="Thalhammer A."/>
            <person name="Schoepfer R."/>
            <person name="Burlingame A.L."/>
        </authorList>
    </citation>
    <scope>IDENTIFICATION BY MASS SPECTROMETRY [LARGE SCALE ANALYSIS]</scope>
    <source>
        <tissue>Brain</tissue>
    </source>
</reference>
<reference key="6">
    <citation type="journal article" date="2010" name="Cell">
        <title>A tissue-specific atlas of mouse protein phosphorylation and expression.</title>
        <authorList>
            <person name="Huttlin E.L."/>
            <person name="Jedrychowski M.P."/>
            <person name="Elias J.E."/>
            <person name="Goswami T."/>
            <person name="Rad R."/>
            <person name="Beausoleil S.A."/>
            <person name="Villen J."/>
            <person name="Haas W."/>
            <person name="Sowa M.E."/>
            <person name="Gygi S.P."/>
        </authorList>
    </citation>
    <scope>PHOSPHORYLATION [LARGE SCALE ANALYSIS] AT SER-438; SER-440; SER-444; SER-448 AND SER-450</scope>
    <scope>PHOSPHORYLATION [LARGE SCALE ANALYSIS] AT TYR-831 (ISOFORM 12)</scope>
    <scope>PHOSPHORYLATION [LARGE SCALE ANALYSIS] AT TYR-813 (ISOFORM 13)</scope>
    <scope>IDENTIFICATION BY MASS SPECTROMETRY [LARGE SCALE ANALYSIS]</scope>
    <source>
        <tissue>Brain</tissue>
    </source>
</reference>
<reference key="7">
    <citation type="journal article" date="2017" name="J. Biol. Chem.">
        <title>Schwannomin-interacting protein 1 isoform IQCJ-SCHIP1 is a multipartner ankyrin- and spectrin-binding protein involved in the organization of nodes of Ranvier.</title>
        <authorList>
            <person name="Martin P.M."/>
            <person name="Cifuentes-Diaz C."/>
            <person name="Devaux J."/>
            <person name="Garcia M."/>
            <person name="Bureau J."/>
            <person name="Thomasseau S."/>
            <person name="Klingler E."/>
            <person name="Girault J.A."/>
            <person name="Goutebroze L."/>
        </authorList>
    </citation>
    <scope>INTERACTION WITH IQCJ-SCHIP1</scope>
</reference>
<reference key="8">
    <citation type="journal article" date="2024" name="Front. Pharmacol.">
        <title>The transmembrane channel-like 6 (TMC6) in primary sensory neurons involving thermal sensation via modulating M channels.</title>
        <authorList>
            <person name="An Y."/>
            <person name="Hu J."/>
            <person name="Hao H."/>
            <person name="Zhao W."/>
            <person name="Zhang X."/>
            <person name="Shao J."/>
            <person name="Wang C."/>
            <person name="Li X."/>
            <person name="Liu C."/>
            <person name="He J."/>
            <person name="Zhao Y."/>
            <person name="Zhang H."/>
            <person name="Du X."/>
        </authorList>
    </citation>
    <scope>TISSUE SPECIFICITY</scope>
</reference>
<proteinExistence type="evidence at protein level"/>
<dbReference type="EMBL" id="AB000494">
    <property type="protein sequence ID" value="BAA37156.1"/>
    <property type="molecule type" value="mRNA"/>
</dbReference>
<dbReference type="EMBL" id="AB000495">
    <property type="protein sequence ID" value="BAA37157.1"/>
    <property type="molecule type" value="mRNA"/>
</dbReference>
<dbReference type="EMBL" id="AB000496">
    <property type="protein sequence ID" value="BAA37158.1"/>
    <property type="molecule type" value="mRNA"/>
</dbReference>
<dbReference type="EMBL" id="AB000497">
    <property type="protein sequence ID" value="BAA37159.1"/>
    <property type="molecule type" value="mRNA"/>
</dbReference>
<dbReference type="EMBL" id="AB000498">
    <property type="protein sequence ID" value="BAA37160.1"/>
    <property type="molecule type" value="mRNA"/>
</dbReference>
<dbReference type="EMBL" id="AB000499">
    <property type="protein sequence ID" value="BAA37161.1"/>
    <property type="molecule type" value="mRNA"/>
</dbReference>
<dbReference type="EMBL" id="AB000500">
    <property type="protein sequence ID" value="BAA37162.1"/>
    <property type="molecule type" value="mRNA"/>
</dbReference>
<dbReference type="EMBL" id="AB000501">
    <property type="protein sequence ID" value="BAA37163.1"/>
    <property type="molecule type" value="mRNA"/>
</dbReference>
<dbReference type="EMBL" id="AB000502">
    <property type="protein sequence ID" value="BAA37164.1"/>
    <property type="molecule type" value="mRNA"/>
</dbReference>
<dbReference type="EMBL" id="AB000503">
    <property type="protein sequence ID" value="BAA37165.1"/>
    <property type="molecule type" value="mRNA"/>
</dbReference>
<dbReference type="EMBL" id="AB000504">
    <property type="protein sequence ID" value="BAA37166.1"/>
    <property type="molecule type" value="mRNA"/>
</dbReference>
<dbReference type="EMBL" id="AF490773">
    <property type="protein sequence ID" value="AAM09696.1"/>
    <property type="molecule type" value="mRNA"/>
</dbReference>
<dbReference type="EMBL" id="AK139411">
    <property type="protein sequence ID" value="BAE24000.1"/>
    <property type="molecule type" value="mRNA"/>
</dbReference>
<dbReference type="CCDS" id="CCDS17193.1">
    <molecule id="Q9Z351-1"/>
</dbReference>
<dbReference type="CCDS" id="CCDS17194.1">
    <molecule id="Q9Z351-2"/>
</dbReference>
<dbReference type="CCDS" id="CCDS17195.1">
    <molecule id="Q9Z351-3"/>
</dbReference>
<dbReference type="CCDS" id="CCDS17196.1">
    <molecule id="Q9Z351-4"/>
</dbReference>
<dbReference type="CCDS" id="CCDS17197.1">
    <molecule id="Q9Z351-5"/>
</dbReference>
<dbReference type="CCDS" id="CCDS17198.1">
    <molecule id="Q9Z351-12"/>
</dbReference>
<dbReference type="RefSeq" id="NP_001006675.1">
    <property type="nucleotide sequence ID" value="NM_001006674.2"/>
</dbReference>
<dbReference type="RefSeq" id="NP_001289817.1">
    <property type="nucleotide sequence ID" value="NM_001302888.1"/>
</dbReference>
<dbReference type="RefSeq" id="NP_034741.2">
    <property type="nucleotide sequence ID" value="NM_010611.3"/>
</dbReference>
<dbReference type="SMR" id="Q9Z351"/>
<dbReference type="BioGRID" id="200918">
    <property type="interactions" value="70"/>
</dbReference>
<dbReference type="FunCoup" id="Q9Z351">
    <property type="interactions" value="118"/>
</dbReference>
<dbReference type="IntAct" id="Q9Z351">
    <property type="interactions" value="3"/>
</dbReference>
<dbReference type="STRING" id="10090.ENSMUSP00000122915"/>
<dbReference type="BindingDB" id="Q9Z351"/>
<dbReference type="ChEMBL" id="CHEMBL2985"/>
<dbReference type="DrugCentral" id="Q9Z351"/>
<dbReference type="GlyGen" id="Q9Z351">
    <property type="glycosylation" value="3 sites, 2 N-linked glycans (1 site), 1 O-linked glycan (1 site)"/>
</dbReference>
<dbReference type="iPTMnet" id="Q9Z351"/>
<dbReference type="PhosphoSitePlus" id="Q9Z351"/>
<dbReference type="SwissPalm" id="Q9Z351"/>
<dbReference type="PaxDb" id="10090-ENSMUSP00000122915"/>
<dbReference type="ProteomicsDB" id="263404">
    <molecule id="Q9Z351-1"/>
</dbReference>
<dbReference type="ProteomicsDB" id="263405">
    <molecule id="Q9Z351-2"/>
</dbReference>
<dbReference type="ProteomicsDB" id="263406">
    <molecule id="Q9Z351-3"/>
</dbReference>
<dbReference type="ProteomicsDB" id="263407">
    <molecule id="Q9Z351-4"/>
</dbReference>
<dbReference type="ProteomicsDB" id="263408">
    <molecule id="Q9Z351-5"/>
</dbReference>
<dbReference type="ProteomicsDB" id="263409">
    <molecule id="Q9Z351-6"/>
</dbReference>
<dbReference type="ProteomicsDB" id="263410">
    <molecule id="Q9Z351-7"/>
</dbReference>
<dbReference type="ProteomicsDB" id="263411">
    <molecule id="Q9Z351-8"/>
</dbReference>
<dbReference type="ProteomicsDB" id="263412">
    <molecule id="Q9Z351-9"/>
</dbReference>
<dbReference type="ProteomicsDB" id="263413">
    <molecule id="Q9Z351-10"/>
</dbReference>
<dbReference type="ProteomicsDB" id="263414">
    <molecule id="Q9Z351-11"/>
</dbReference>
<dbReference type="ProteomicsDB" id="263415">
    <molecule id="Q9Z351-12"/>
</dbReference>
<dbReference type="ProteomicsDB" id="263416">
    <molecule id="Q9Z351-13"/>
</dbReference>
<dbReference type="ABCD" id="Q9Z351">
    <property type="antibodies" value="1 sequenced antibody"/>
</dbReference>
<dbReference type="DNASU" id="16536"/>
<dbReference type="GeneID" id="16536"/>
<dbReference type="KEGG" id="mmu:16536"/>
<dbReference type="UCSC" id="uc008olg.2">
    <molecule id="Q9Z351-11"/>
    <property type="organism name" value="mouse"/>
</dbReference>
<dbReference type="AGR" id="MGI:1309503"/>
<dbReference type="CTD" id="3785"/>
<dbReference type="MGI" id="MGI:1309503">
    <property type="gene designation" value="Kcnq2"/>
</dbReference>
<dbReference type="eggNOG" id="KOG1419">
    <property type="taxonomic scope" value="Eukaryota"/>
</dbReference>
<dbReference type="InParanoid" id="Q9Z351"/>
<dbReference type="OrthoDB" id="8879391at2759"/>
<dbReference type="BioGRID-ORCS" id="16536">
    <property type="hits" value="1 hit in 78 CRISPR screens"/>
</dbReference>
<dbReference type="CD-CODE" id="CE726F99">
    <property type="entry name" value="Postsynaptic density"/>
</dbReference>
<dbReference type="PRO" id="PR:Q9Z351"/>
<dbReference type="Proteomes" id="UP000000589">
    <property type="component" value="Unplaced"/>
</dbReference>
<dbReference type="RNAct" id="Q9Z351">
    <property type="molecule type" value="protein"/>
</dbReference>
<dbReference type="GO" id="GO:0043194">
    <property type="term" value="C:axon initial segment"/>
    <property type="evidence" value="ECO:0000314"/>
    <property type="project" value="BHF-UCL"/>
</dbReference>
<dbReference type="GO" id="GO:0009986">
    <property type="term" value="C:cell surface"/>
    <property type="evidence" value="ECO:0000314"/>
    <property type="project" value="MGI"/>
</dbReference>
<dbReference type="GO" id="GO:0005739">
    <property type="term" value="C:mitochondrion"/>
    <property type="evidence" value="ECO:0007669"/>
    <property type="project" value="GOC"/>
</dbReference>
<dbReference type="GO" id="GO:0033268">
    <property type="term" value="C:node of Ranvier"/>
    <property type="evidence" value="ECO:0000314"/>
    <property type="project" value="BHF-UCL"/>
</dbReference>
<dbReference type="GO" id="GO:0005886">
    <property type="term" value="C:plasma membrane"/>
    <property type="evidence" value="ECO:0000314"/>
    <property type="project" value="BHF-UCL"/>
</dbReference>
<dbReference type="GO" id="GO:0045202">
    <property type="term" value="C:synapse"/>
    <property type="evidence" value="ECO:0007669"/>
    <property type="project" value="GOC"/>
</dbReference>
<dbReference type="GO" id="GO:0008076">
    <property type="term" value="C:voltage-gated potassium channel complex"/>
    <property type="evidence" value="ECO:0000316"/>
    <property type="project" value="MGI"/>
</dbReference>
<dbReference type="GO" id="GO:0005516">
    <property type="term" value="F:calmodulin binding"/>
    <property type="evidence" value="ECO:0000315"/>
    <property type="project" value="MGI"/>
</dbReference>
<dbReference type="GO" id="GO:0005267">
    <property type="term" value="F:potassium channel activity"/>
    <property type="evidence" value="ECO:0000315"/>
    <property type="project" value="MGI"/>
</dbReference>
<dbReference type="GO" id="GO:0022843">
    <property type="term" value="F:voltage-gated monoatomic cation channel activity"/>
    <property type="evidence" value="ECO:0000250"/>
    <property type="project" value="UniProtKB"/>
</dbReference>
<dbReference type="GO" id="GO:0005244">
    <property type="term" value="F:voltage-gated monoatomic ion channel activity"/>
    <property type="evidence" value="ECO:0000316"/>
    <property type="project" value="MGI"/>
</dbReference>
<dbReference type="GO" id="GO:0005249">
    <property type="term" value="F:voltage-gated potassium channel activity"/>
    <property type="evidence" value="ECO:0000250"/>
    <property type="project" value="UniProtKB"/>
</dbReference>
<dbReference type="GO" id="GO:0001508">
    <property type="term" value="P:action potential"/>
    <property type="evidence" value="ECO:0000314"/>
    <property type="project" value="MGI"/>
</dbReference>
<dbReference type="GO" id="GO:0099610">
    <property type="term" value="P:action potential initiation"/>
    <property type="evidence" value="ECO:0000314"/>
    <property type="project" value="MGI"/>
</dbReference>
<dbReference type="GO" id="GO:0097314">
    <property type="term" value="P:apoptosome assembly"/>
    <property type="evidence" value="ECO:0000315"/>
    <property type="project" value="MGI"/>
</dbReference>
<dbReference type="GO" id="GO:0007420">
    <property type="term" value="P:brain development"/>
    <property type="evidence" value="ECO:0000315"/>
    <property type="project" value="MGI"/>
</dbReference>
<dbReference type="GO" id="GO:0071277">
    <property type="term" value="P:cellular response to calcium ion"/>
    <property type="evidence" value="ECO:0000314"/>
    <property type="project" value="MGI"/>
</dbReference>
<dbReference type="GO" id="GO:0071466">
    <property type="term" value="P:cellular response to xenobiotic stimulus"/>
    <property type="evidence" value="ECO:0000314"/>
    <property type="project" value="MGI"/>
</dbReference>
<dbReference type="GO" id="GO:0050890">
    <property type="term" value="P:cognition"/>
    <property type="evidence" value="ECO:0000315"/>
    <property type="project" value="MGI"/>
</dbReference>
<dbReference type="GO" id="GO:0021542">
    <property type="term" value="P:dentate gyrus development"/>
    <property type="evidence" value="ECO:0000316"/>
    <property type="project" value="MGI"/>
</dbReference>
<dbReference type="GO" id="GO:0008340">
    <property type="term" value="P:determination of adult lifespan"/>
    <property type="evidence" value="ECO:0000315"/>
    <property type="project" value="MGI"/>
</dbReference>
<dbReference type="GO" id="GO:0006897">
    <property type="term" value="P:endocytosis"/>
    <property type="evidence" value="ECO:0000315"/>
    <property type="project" value="MGI"/>
</dbReference>
<dbReference type="GO" id="GO:0030010">
    <property type="term" value="P:establishment of cell polarity"/>
    <property type="evidence" value="ECO:0000315"/>
    <property type="project" value="MGI"/>
</dbReference>
<dbReference type="GO" id="GO:0098976">
    <property type="term" value="P:excitatory chemical synaptic transmission"/>
    <property type="evidence" value="ECO:0000314"/>
    <property type="project" value="MGI"/>
</dbReference>
<dbReference type="GO" id="GO:0006887">
    <property type="term" value="P:exocytosis"/>
    <property type="evidence" value="ECO:0000315"/>
    <property type="project" value="MGI"/>
</dbReference>
<dbReference type="GO" id="GO:0035640">
    <property type="term" value="P:exploration behavior"/>
    <property type="evidence" value="ECO:0000315"/>
    <property type="project" value="MGI"/>
</dbReference>
<dbReference type="GO" id="GO:0010467">
    <property type="term" value="P:gene expression"/>
    <property type="evidence" value="ECO:0000314"/>
    <property type="project" value="MGI"/>
</dbReference>
<dbReference type="GO" id="GO:0007625">
    <property type="term" value="P:grooming behavior"/>
    <property type="evidence" value="ECO:0000315"/>
    <property type="project" value="MGI"/>
</dbReference>
<dbReference type="GO" id="GO:0097432">
    <property type="term" value="P:hippocampal pyramidal neuron differentiation"/>
    <property type="evidence" value="ECO:0000315"/>
    <property type="project" value="MGI"/>
</dbReference>
<dbReference type="GO" id="GO:0021766">
    <property type="term" value="P:hippocampus development"/>
    <property type="evidence" value="ECO:0000315"/>
    <property type="project" value="MGI"/>
</dbReference>
<dbReference type="GO" id="GO:0098977">
    <property type="term" value="P:inhibitory chemical synaptic transmission"/>
    <property type="evidence" value="ECO:0000316"/>
    <property type="project" value="MGI"/>
</dbReference>
<dbReference type="GO" id="GO:0007612">
    <property type="term" value="P:learning"/>
    <property type="evidence" value="ECO:0000315"/>
    <property type="project" value="MGI"/>
</dbReference>
<dbReference type="GO" id="GO:0007613">
    <property type="term" value="P:memory"/>
    <property type="evidence" value="ECO:0000315"/>
    <property type="project" value="MGI"/>
</dbReference>
<dbReference type="GO" id="GO:0051882">
    <property type="term" value="P:mitochondrial depolarization"/>
    <property type="evidence" value="ECO:0000315"/>
    <property type="project" value="MGI"/>
</dbReference>
<dbReference type="GO" id="GO:0034220">
    <property type="term" value="P:monoatomic ion transmembrane transport"/>
    <property type="evidence" value="ECO:0000315"/>
    <property type="project" value="MGI"/>
</dbReference>
<dbReference type="GO" id="GO:0061744">
    <property type="term" value="P:motor behavior"/>
    <property type="evidence" value="ECO:0000315"/>
    <property type="project" value="MGI"/>
</dbReference>
<dbReference type="GO" id="GO:0021675">
    <property type="term" value="P:nerve development"/>
    <property type="evidence" value="ECO:0000315"/>
    <property type="project" value="MGI"/>
</dbReference>
<dbReference type="GO" id="GO:0051402">
    <property type="term" value="P:neuron apoptotic process"/>
    <property type="evidence" value="ECO:0000315"/>
    <property type="project" value="MGI"/>
</dbReference>
<dbReference type="GO" id="GO:0030182">
    <property type="term" value="P:neuron differentiation"/>
    <property type="evidence" value="ECO:0000315"/>
    <property type="project" value="MGI"/>
</dbReference>
<dbReference type="GO" id="GO:0016322">
    <property type="term" value="P:neuron remodeling"/>
    <property type="evidence" value="ECO:0000316"/>
    <property type="project" value="MGI"/>
</dbReference>
<dbReference type="GO" id="GO:0019228">
    <property type="term" value="P:neuronal action potential"/>
    <property type="evidence" value="ECO:0000315"/>
    <property type="project" value="MGI"/>
</dbReference>
<dbReference type="GO" id="GO:0071805">
    <property type="term" value="P:potassium ion transmembrane transport"/>
    <property type="evidence" value="ECO:0000250"/>
    <property type="project" value="UniProtKB"/>
</dbReference>
<dbReference type="GO" id="GO:0006606">
    <property type="term" value="P:protein import into nucleus"/>
    <property type="evidence" value="ECO:0000315"/>
    <property type="project" value="MGI"/>
</dbReference>
<dbReference type="GO" id="GO:0015031">
    <property type="term" value="P:protein transport"/>
    <property type="evidence" value="ECO:0000315"/>
    <property type="project" value="MGI"/>
</dbReference>
<dbReference type="GO" id="GO:0036343">
    <property type="term" value="P:psychomotor behavior"/>
    <property type="evidence" value="ECO:0000315"/>
    <property type="project" value="MGI"/>
</dbReference>
<dbReference type="GO" id="GO:0099611">
    <property type="term" value="P:regulation of action potential firing threshold"/>
    <property type="evidence" value="ECO:0000316"/>
    <property type="project" value="MGI"/>
</dbReference>
<dbReference type="GO" id="GO:0042391">
    <property type="term" value="P:regulation of membrane potential"/>
    <property type="evidence" value="ECO:0000315"/>
    <property type="project" value="MGI"/>
</dbReference>
<dbReference type="GO" id="GO:0048167">
    <property type="term" value="P:regulation of synaptic plasticity"/>
    <property type="evidence" value="ECO:0000315"/>
    <property type="project" value="MGI"/>
</dbReference>
<dbReference type="GO" id="GO:0010996">
    <property type="term" value="P:response to auditory stimulus"/>
    <property type="evidence" value="ECO:0000314"/>
    <property type="project" value="MGI"/>
</dbReference>
<dbReference type="GO" id="GO:0009612">
    <property type="term" value="P:response to mechanical stimulus"/>
    <property type="evidence" value="ECO:0000315"/>
    <property type="project" value="MGI"/>
</dbReference>
<dbReference type="GO" id="GO:0009266">
    <property type="term" value="P:response to temperature stimulus"/>
    <property type="evidence" value="ECO:0000315"/>
    <property type="project" value="MGI"/>
</dbReference>
<dbReference type="GO" id="GO:0009410">
    <property type="term" value="P:response to xenobiotic stimulus"/>
    <property type="evidence" value="ECO:0000314"/>
    <property type="project" value="MGI"/>
</dbReference>
<dbReference type="GO" id="GO:0007605">
    <property type="term" value="P:sensory perception of sound"/>
    <property type="evidence" value="ECO:0000316"/>
    <property type="project" value="MGI"/>
</dbReference>
<dbReference type="GO" id="GO:0035176">
    <property type="term" value="P:social behavior"/>
    <property type="evidence" value="ECO:0000315"/>
    <property type="project" value="MGI"/>
</dbReference>
<dbReference type="GO" id="GO:0035725">
    <property type="term" value="P:sodium ion transmembrane transport"/>
    <property type="evidence" value="ECO:0000316"/>
    <property type="project" value="MGI"/>
</dbReference>
<dbReference type="GO" id="GO:1903701">
    <property type="term" value="P:substantia propria of cornea development"/>
    <property type="evidence" value="ECO:0000315"/>
    <property type="project" value="MGI"/>
</dbReference>
<dbReference type="GO" id="GO:0019226">
    <property type="term" value="P:transmission of nerve impulse"/>
    <property type="evidence" value="ECO:0000315"/>
    <property type="project" value="MGI"/>
</dbReference>
<dbReference type="FunFam" id="1.20.120.350:FF:000017">
    <property type="entry name" value="potassium voltage-gated channel subfamily KQT member 1"/>
    <property type="match status" value="1"/>
</dbReference>
<dbReference type="FunFam" id="1.10.287.70:FF:000016">
    <property type="entry name" value="Putative potassium voltage-gated channel subfamily KQT member 2"/>
    <property type="match status" value="1"/>
</dbReference>
<dbReference type="Gene3D" id="1.10.287.70">
    <property type="match status" value="1"/>
</dbReference>
<dbReference type="Gene3D" id="6.10.140.1910">
    <property type="match status" value="2"/>
</dbReference>
<dbReference type="InterPro" id="IPR005821">
    <property type="entry name" value="Ion_trans_dom"/>
</dbReference>
<dbReference type="InterPro" id="IPR003937">
    <property type="entry name" value="K_chnl_volt-dep_KCNQ"/>
</dbReference>
<dbReference type="InterPro" id="IPR003947">
    <property type="entry name" value="K_chnl_volt-dep_KCNQ2"/>
</dbReference>
<dbReference type="InterPro" id="IPR013821">
    <property type="entry name" value="K_chnl_volt-dep_KCNQ_C"/>
</dbReference>
<dbReference type="PANTHER" id="PTHR47735:SF4">
    <property type="entry name" value="POTASSIUM VOLTAGE-GATED CHANNEL SUBFAMILY KQT MEMBER 2"/>
    <property type="match status" value="1"/>
</dbReference>
<dbReference type="PANTHER" id="PTHR47735">
    <property type="entry name" value="POTASSIUM VOLTAGE-GATED CHANNEL SUBFAMILY KQT MEMBER 4"/>
    <property type="match status" value="1"/>
</dbReference>
<dbReference type="Pfam" id="PF00520">
    <property type="entry name" value="Ion_trans"/>
    <property type="match status" value="1"/>
</dbReference>
<dbReference type="Pfam" id="PF16642">
    <property type="entry name" value="KCNQ2_u3"/>
    <property type="match status" value="1"/>
</dbReference>
<dbReference type="Pfam" id="PF03520">
    <property type="entry name" value="KCNQ_channel"/>
    <property type="match status" value="2"/>
</dbReference>
<dbReference type="PRINTS" id="PR00169">
    <property type="entry name" value="KCHANNEL"/>
</dbReference>
<dbReference type="PRINTS" id="PR01461">
    <property type="entry name" value="KCNQ2CHANNEL"/>
</dbReference>
<dbReference type="PRINTS" id="PR01459">
    <property type="entry name" value="KCNQCHANNEL"/>
</dbReference>
<dbReference type="SUPFAM" id="SSF81324">
    <property type="entry name" value="Voltage-gated potassium channels"/>
    <property type="match status" value="1"/>
</dbReference>
<organism>
    <name type="scientific">Mus musculus</name>
    <name type="common">Mouse</name>
    <dbReference type="NCBI Taxonomy" id="10090"/>
    <lineage>
        <taxon>Eukaryota</taxon>
        <taxon>Metazoa</taxon>
        <taxon>Chordata</taxon>
        <taxon>Craniata</taxon>
        <taxon>Vertebrata</taxon>
        <taxon>Euteleostomi</taxon>
        <taxon>Mammalia</taxon>
        <taxon>Eutheria</taxon>
        <taxon>Euarchontoglires</taxon>
        <taxon>Glires</taxon>
        <taxon>Rodentia</taxon>
        <taxon>Myomorpha</taxon>
        <taxon>Muroidea</taxon>
        <taxon>Muridae</taxon>
        <taxon>Murinae</taxon>
        <taxon>Mus</taxon>
        <taxon>Mus</taxon>
    </lineage>
</organism>
<keyword id="KW-0025">Alternative splicing</keyword>
<keyword id="KW-1003">Cell membrane</keyword>
<keyword id="KW-0407">Ion channel</keyword>
<keyword id="KW-0406">Ion transport</keyword>
<keyword id="KW-0472">Membrane</keyword>
<keyword id="KW-0597">Phosphoprotein</keyword>
<keyword id="KW-0630">Potassium</keyword>
<keyword id="KW-0631">Potassium channel</keyword>
<keyword id="KW-0633">Potassium transport</keyword>
<keyword id="KW-1185">Reference proteome</keyword>
<keyword id="KW-0812">Transmembrane</keyword>
<keyword id="KW-1133">Transmembrane helix</keyword>
<keyword id="KW-0813">Transport</keyword>
<keyword id="KW-0832">Ubl conjugation</keyword>
<keyword id="KW-0851">Voltage-gated channel</keyword>
<sequence>MVQKSRNGGVYPGTSGEKKLKVGFVGLDPGAPDSTRDGALLIAGSEAPKRGSVLSKPRTGGAGAGKPPKRNAFYRKLQNFLYNVLERPRGWAFIYHAYVFLLVFSCLVLSVFSTIKEYEKSSEGALYILEIVTIVVFGVEYFVRIWAAGCCCRYRGWRGRLKFARKPFCVIDIMVLIASIAVLAAGSQGNVFATSALRSLRFLQILRMIRMDRRGGTWKLLGSVVYAHSKELVTAWYIGFLCLILASFLVYLAEKGENDHFDTYADALWWGLITLTTIGYGDKYPQTWNGRLLAATFTLIGVSFFALPAGILGSGFALKVQEQHRPKHFEKRRNPAAGLIQSAWRFYATNLSRTDLHSTWQYYERTVTVPMYRLIPPLNQLELLRNLKSKSGLTFRKEPQPEPSPSQKVSLKDRVFSSPRGMAAKGKGSPQAQTVRRSPSADQSLDDSPSKVPKSWSFGDRSRTRQAFRIKGAASRQNSEEASLPGEDIVEDNKSCNCEFVTEDLTPGLKVSIRAVCVMRFLVSKRKFKESLRPYDVMDVIEQYSAGHLDMLSRIKSLQSRIDMIVGPPPPSTPRDKKYPTKGPTAPSRESPQYSPRVDHIVGRGPTITDKDRTKGPAETELPEDPSMMGRLGKVEKQVLSMEKKLDFLVSIYTQRMGIPPAETEAYFGAKEPEPAPPYHSPEDSRDHADKHGCIIKIVRSTSSTGQRNYAAPPAIPPAQCPPSTSWQQSHQRHGTSPVGDHGSLVLRLERSAGMMSCH</sequence>
<accession>Q9Z351</accession>
<accession>Q3UTI0</accession>
<accession>Q8R498</accession>
<accession>Q9QWN9</accession>
<accession>Q9Z342</accession>
<accession>Q9Z343</accession>
<accession>Q9Z344</accession>
<accession>Q9Z345</accession>
<accession>Q9Z346</accession>
<accession>Q9Z347</accession>
<accession>Q9Z348</accession>
<accession>Q9Z349</accession>
<accession>Q9Z350</accession>
<name>KCNQ2_MOUSE</name>
<protein>
    <recommendedName>
        <fullName evidence="13">Potassium voltage-gated channel subfamily KQT member 2</fullName>
    </recommendedName>
    <alternativeName>
        <fullName evidence="10">KQT-like 2</fullName>
    </alternativeName>
    <alternativeName>
        <fullName>Potassium channel subunit alpha KvLQT2</fullName>
    </alternativeName>
    <alternativeName>
        <fullName>Voltage-gated potassium channel subunit Kv7.2</fullName>
    </alternativeName>
</protein>
<evidence type="ECO:0000250" key="1"/>
<evidence type="ECO:0000250" key="2">
    <source>
        <dbReference type="UniProtKB" id="O43526"/>
    </source>
</evidence>
<evidence type="ECO:0000250" key="3">
    <source>
        <dbReference type="UniProtKB" id="O88943"/>
    </source>
</evidence>
<evidence type="ECO:0000255" key="4"/>
<evidence type="ECO:0000256" key="5">
    <source>
        <dbReference type="SAM" id="MobiDB-lite"/>
    </source>
</evidence>
<evidence type="ECO:0000269" key="6">
    <source>
    </source>
</evidence>
<evidence type="ECO:0000269" key="7">
    <source>
    </source>
</evidence>
<evidence type="ECO:0000269" key="8">
    <source>
    </source>
</evidence>
<evidence type="ECO:0000269" key="9">
    <source>
    </source>
</evidence>
<evidence type="ECO:0000303" key="10">
    <source>
    </source>
</evidence>
<evidence type="ECO:0000303" key="11">
    <source>
    </source>
</evidence>
<evidence type="ECO:0000303" key="12">
    <source>
    </source>
</evidence>
<evidence type="ECO:0000305" key="13"/>
<evidence type="ECO:0000312" key="14">
    <source>
        <dbReference type="MGI" id="MGI:1309503"/>
    </source>
</evidence>
<evidence type="ECO:0007744" key="15">
    <source>
    </source>
</evidence>
<gene>
    <name evidence="14" type="primary">Kcnq2</name>
    <name evidence="12" type="synonym">Kqt2</name>
</gene>
<comment type="function">
    <text evidence="2 7">Pore-forming subunit of the voltage-gated potassium (Kv) M-channel which is responsible for the M-current, a key controller of neuronal excitability (PubMed:12223552). M-channel is composed of pore-forming subunits KCNQ2 and KCNQ3 assembled as heterotetramers. The native M-current has a slowly activating and deactivating potassium conductance which plays a critical role in determining the subthreshold electrical excitability of neurons as well as the responsiveness to synaptic inputs (PubMed:12223552). M-channel is selectively permeable in vitro to other cations besides potassium, in decreasing order of affinity K(+) &gt; Rb(+) &gt; Cs(+) &gt; Na(+). M-channel association with SLC5A3/SMIT1 alters channel ion selectivity, increasing Na(+) and Cs(+) permeation relative to K(+). Suppressed by activation of the muscarinic acetylcholine receptor CHRM1 (By similarity).</text>
</comment>
<comment type="catalytic activity">
    <reaction evidence="2">
        <text>K(+)(in) = K(+)(out)</text>
        <dbReference type="Rhea" id="RHEA:29463"/>
        <dbReference type="ChEBI" id="CHEBI:29103"/>
    </reaction>
</comment>
<comment type="catalytic activity">
    <reaction evidence="2">
        <text>Rb(+)(in) = Rb(+)(out)</text>
        <dbReference type="Rhea" id="RHEA:78547"/>
        <dbReference type="ChEBI" id="CHEBI:49847"/>
    </reaction>
</comment>
<comment type="catalytic activity">
    <reaction evidence="2">
        <text>Cs(+)(in) = Cs(+)(out)</text>
        <dbReference type="Rhea" id="RHEA:78555"/>
        <dbReference type="ChEBI" id="CHEBI:49547"/>
    </reaction>
</comment>
<comment type="catalytic activity">
    <reaction evidence="2">
        <text>Na(+)(in) = Na(+)(out)</text>
        <dbReference type="Rhea" id="RHEA:34963"/>
        <dbReference type="ChEBI" id="CHEBI:29101"/>
    </reaction>
</comment>
<comment type="activity regulation">
    <text evidence="2">Phosphatidylinositol-4,5-bisphosphate (PIP2) potentiates the activation of KCNQ channels by enhancing the electro-mechanical coupling of the voltage-sensing domain (VSD) and the pore-forming domain (PD). In the closed state of the channel, PIP2 is anchored at the S2-S3 loop; upon channel activation, PIP2 interacts with the S4-S5 linker and is involved in channel gating. Calcium suppresses KCNQ2 and KCNQ2-KCNQ3 channel currents, with calcium-bound calmodulin inducing a change in channel configuration which leads to the reduction of channel affinity for PIP2 and subsequent current suppression.</text>
</comment>
<comment type="subunit">
    <text evidence="2 3 7 8">Heterotetramer with KCNQ3; forms heterotetrameric M-channel responsible for the M-current. Homotetrameric; forms a functional homotetrameric channel resulting in the expression of a small M-current (By similarity). Interacts with calmodulin; the interaction is calcium-independent, constitutive and participates in the proper assembly of a functional M-channel (PubMed:12223552). May associate with KCNE2 (By similarity). Interacts with IQCJ-SCHIP1 (PubMed:27979964). Interacts (via the pore module) with SLC5A3/SMIT1; forms a coregulatory complex that alters ion selectivity, voltage dependence and gating kinetics of the channel (By similarity). Interacts with AKAP5; the interaction may help KCNQ2 channel complex to retain calcium-bound calmodulin (By similarity).</text>
</comment>
<comment type="subcellular location">
    <subcellularLocation>
        <location evidence="7">Cell membrane</location>
        <topology evidence="4">Multi-pass membrane protein</topology>
    </subcellularLocation>
</comment>
<comment type="alternative products">
    <event type="alternative splicing"/>
    <isoform>
        <id>Q9Z351-1</id>
        <name>1</name>
        <name>MKQT2.1</name>
        <sequence type="displayed"/>
    </isoform>
    <isoform>
        <id>Q9Z351-2</id>
        <name>2</name>
        <name>MKQT2.2</name>
        <sequence type="described" ref="VSP_001001"/>
    </isoform>
    <isoform>
        <id>Q9Z351-3</id>
        <name>3</name>
        <name>MKQT2.3</name>
        <sequence type="described" ref="VSP_001000"/>
    </isoform>
    <isoform>
        <id>Q9Z351-4</id>
        <name>4</name>
        <name>MKQT2.4</name>
        <sequence type="described" ref="VSP_001002"/>
    </isoform>
    <isoform>
        <id>Q9Z351-5</id>
        <name>5</name>
        <name>MKQT2.5</name>
        <sequence type="described" ref="VSP_001003 VSP_001004"/>
    </isoform>
    <isoform>
        <id>Q9Z351-6</id>
        <name>6</name>
        <name>MKQT2.6</name>
        <sequence type="described" ref="VSP_001005 VSP_001006"/>
    </isoform>
    <isoform>
        <id>Q9Z351-7</id>
        <name>7</name>
        <name>MKQT2.7</name>
        <sequence type="described" ref="VSP_000997 VSP_000998 VSP_000999"/>
    </isoform>
    <isoform>
        <id>Q9Z351-8</id>
        <name>8</name>
        <name>MKQT2.8</name>
        <sequence type="described" ref="VSP_000998 VSP_000999"/>
    </isoform>
    <isoform>
        <id>Q9Z351-9</id>
        <name>9</name>
        <name>MKQT2.9</name>
        <sequence type="described" ref="VSP_000993 VSP_000994"/>
    </isoform>
    <isoform>
        <id>Q9Z351-10</id>
        <name>10</name>
        <name>MKQT2.10</name>
        <sequence type="described" ref="VSP_000995 VSP_000996"/>
    </isoform>
    <isoform>
        <id>Q9Z351-11</id>
        <name>11</name>
        <name>MKQT2.11</name>
        <sequence type="described" ref="VSP_000991 VSP_000992"/>
    </isoform>
    <isoform>
        <id>Q9Z351-12</id>
        <name>12</name>
        <sequence type="described" ref="VSP_000997 VSP_012365 VSP_001002 VSP_012366"/>
    </isoform>
    <isoform>
        <id>Q9Z351-13</id>
        <name>13</name>
        <sequence type="described" ref="VSP_000997 VSP_022637 VSP_012366"/>
    </isoform>
</comment>
<comment type="tissue specificity">
    <text evidence="9">Exclusively expressed in the brain. Expressed in every neuron-containing regions of the central nervous system examined, such as the cerebellum, cerebral cortex, occipital pole, substantia nigra, amygdala, caudate nucleus, hippocampus and thalamus. Also detected in the cochlea. Expressed in dorsal root ganglion (DRG) neurons (PubMed:38440182).</text>
</comment>
<comment type="developmental stage">
    <text>Detected at day 11, 15 and 17 of the embryonic development. Expression increases by a factor of 2.5 at 1 week after birth. Then the expression level remains stable until the adult stage. The mRNAs for shorter forms (isoforms 9, 10 and 11) are specifically expressed in an embryo on the 11th day after gestation.</text>
</comment>
<comment type="domain">
    <text evidence="2">Each subunit contains six transmembrane segments (S1-S6) with S1-S4 forming one voltage sensing domain (VSD) and S5-S6 contributing to form one quarter of an interlocking pore-forming domain (PD).</text>
</comment>
<comment type="domain">
    <text evidence="2">The S4-S5 linker preferentially interacts with PIP2 in the open-state KCNQ2 channel, whereas the S2-S3 loop interacts with PIP2 in the closed state.</text>
</comment>
<comment type="domain">
    <text evidence="2">The intracellular C-terminal domain is bound constitutively by calmodulin (CaM). This domain plays key functions in channel tetramerization, trafficking, and gating.</text>
</comment>
<comment type="PTM">
    <text evidence="2">KCNQ2/KCNQ3 heteromeric current can be increased by intracellular cyclic AMP, an effect that depends on phosphorylation of Ser-52 in the N-terminal region.</text>
</comment>
<comment type="PTM">
    <text evidence="2">KCNQ2/KCNQ3 are ubiquitinated by NEDD4L. Ubiquitination leads to protein degradation. Degradation induced by NEDD4L is inhibited by USP36.</text>
</comment>
<comment type="disruption phenotype">
    <text evidence="6">Mice lacking Kcnq2 present no overt phenotype, but die a few hours after birth of pulmonary atelectasis which is not due to the status of epileptic seizures.</text>
</comment>
<comment type="miscellaneous">
    <molecule>Isoform 6</molecule>
    <text evidence="13">May be due to an intron retention.</text>
</comment>
<comment type="miscellaneous">
    <molecule>Isoform 7</molecule>
    <text evidence="13">May be due to an intron retention.</text>
</comment>
<comment type="miscellaneous">
    <molecule>Isoform 8</molecule>
    <text evidence="13">May be due to an intron retention.</text>
</comment>
<comment type="miscellaneous">
    <molecule>Isoform 9</molecule>
    <text evidence="13">May be due to an intron retention.</text>
</comment>
<comment type="miscellaneous">
    <molecule>Isoform 10</molecule>
    <text evidence="13">May be due to an intron retention.</text>
</comment>
<comment type="miscellaneous">
    <molecule>Isoform 11</molecule>
    <text evidence="13">May be due to an intron retention.</text>
</comment>
<comment type="similarity">
    <text evidence="13">Belongs to the potassium channel family. KQT (TC 1.A.1.15) subfamily. Kv7.2/KCNQ2 sub-subfamily.</text>
</comment>